<evidence type="ECO:0000250" key="1">
    <source>
        <dbReference type="UniProtKB" id="Q9Y4U1"/>
    </source>
</evidence>
<evidence type="ECO:0000256" key="2">
    <source>
        <dbReference type="SAM" id="MobiDB-lite"/>
    </source>
</evidence>
<evidence type="ECO:0000305" key="3"/>
<gene>
    <name type="primary">MMACHC</name>
</gene>
<keyword id="KW-0846">Cobalamin</keyword>
<keyword id="KW-0170">Cobalt</keyword>
<keyword id="KW-0963">Cytoplasm</keyword>
<keyword id="KW-0274">FAD</keyword>
<keyword id="KW-0285">Flavoprotein</keyword>
<keyword id="KW-0288">FMN</keyword>
<keyword id="KW-0521">NADP</keyword>
<keyword id="KW-0560">Oxidoreductase</keyword>
<keyword id="KW-0597">Phosphoprotein</keyword>
<keyword id="KW-1185">Reference proteome</keyword>
<keyword id="KW-0808">Transferase</keyword>
<accession>Q5E9C8</accession>
<name>MMAC_BOVIN</name>
<proteinExistence type="evidence at transcript level"/>
<comment type="function">
    <text evidence="1">Cobalamin (vitamin B12) cytosolic chaperone that catalyzes the reductive decyanation of cyanocob(III)alamin (cyanocobalamin, CNCbl) to yield cob(II)alamin and cyanide, using FAD or FMN as cofactors and NADPH as cosubstrate. Cyanocobalamin constitutes the inactive form of vitamin B12 introduced from the diet, and is converted into the active cofactors methylcobalamin (MeCbl) involved in methionine biosynthesis, and 5'-deoxyadenosylcobalamin (AdoCbl) involved in the TCA cycle. Forms a complex with the lysosomal transporter ABCD4 and its chaperone LMBRD1, to transport cobalamin across the lysosomal membrane into the cytosol. The processing of cobalamin in the cytosol occurs in a multiprotein complex composed of at least MMACHC, MMADHC, MTRR (methionine synthase reductase) and MTR (methionine synthase) which may contribute to shuttle safely and efficiently cobalamin towards MTR in order to produce methionine. Also acts as a glutathione transferase by catalyzing the dealkylation of the alkylcob(III)alamins MeCbl and AdoCbl, using the thiolate of glutathione for nucleophilic displacement to generate cob(I)alamin and the corresponding glutathione thioether. The conversion of incoming MeCbl or AdoCbl into a common intermediate cob(I)alamin is necessary to meet the cellular needs for both cofactors. Cysteine and homocysteine cannot substitute for glutathione in this reaction.</text>
</comment>
<comment type="catalytic activity">
    <reaction evidence="1">
        <text>2 cob(II)alamin-[cyanocobalamin reductase] + 2 hydrogen cyanide + NADP(+) = 2 cyanocob(III)alamin + 2 apo-[cyanocobalamin reductase] + NADPH + H(+)</text>
        <dbReference type="Rhea" id="RHEA:16113"/>
        <dbReference type="Rhea" id="RHEA-COMP:14717"/>
        <dbReference type="Rhea" id="RHEA-COMP:14718"/>
        <dbReference type="ChEBI" id="CHEBI:15378"/>
        <dbReference type="ChEBI" id="CHEBI:16304"/>
        <dbReference type="ChEBI" id="CHEBI:17439"/>
        <dbReference type="ChEBI" id="CHEBI:18407"/>
        <dbReference type="ChEBI" id="CHEBI:57783"/>
        <dbReference type="ChEBI" id="CHEBI:58349"/>
        <dbReference type="ChEBI" id="CHEBI:83228"/>
        <dbReference type="EC" id="1.16.1.6"/>
    </reaction>
    <physiologicalReaction direction="right-to-left" evidence="1">
        <dbReference type="Rhea" id="RHEA:16115"/>
    </physiologicalReaction>
</comment>
<comment type="catalytic activity">
    <reaction evidence="1">
        <text>apo-[alkylcobalamin reductase] + an R-cob(III)alamin + glutathione = cob(I)alamin-[alkylcobalamin reductase] + an S-substituted glutathione + H(+)</text>
        <dbReference type="Rhea" id="RHEA:40719"/>
        <dbReference type="Rhea" id="RHEA-COMP:14730"/>
        <dbReference type="Rhea" id="RHEA-COMP:14731"/>
        <dbReference type="ChEBI" id="CHEBI:15378"/>
        <dbReference type="ChEBI" id="CHEBI:57925"/>
        <dbReference type="ChEBI" id="CHEBI:60488"/>
        <dbReference type="ChEBI" id="CHEBI:83228"/>
        <dbReference type="ChEBI" id="CHEBI:90779"/>
        <dbReference type="ChEBI" id="CHEBI:140785"/>
        <dbReference type="EC" id="2.5.1.151"/>
    </reaction>
    <physiologicalReaction direction="left-to-right" evidence="1">
        <dbReference type="Rhea" id="RHEA:40720"/>
    </physiologicalReaction>
</comment>
<comment type="catalytic activity">
    <reaction evidence="1">
        <text>apo-[alkylcobalamin reductase] + methylcob(III)alamin + glutathione = S-methyl glutathione + cob(I)alamin-[alkylcobalamin reductase] + H(+)</text>
        <dbReference type="Rhea" id="RHEA:63132"/>
        <dbReference type="Rhea" id="RHEA-COMP:14730"/>
        <dbReference type="Rhea" id="RHEA-COMP:14731"/>
        <dbReference type="ChEBI" id="CHEBI:15378"/>
        <dbReference type="ChEBI" id="CHEBI:28115"/>
        <dbReference type="ChEBI" id="CHEBI:57925"/>
        <dbReference type="ChEBI" id="CHEBI:60488"/>
        <dbReference type="ChEBI" id="CHEBI:83228"/>
        <dbReference type="ChEBI" id="CHEBI:141467"/>
        <dbReference type="EC" id="2.5.1.151"/>
    </reaction>
    <physiologicalReaction direction="left-to-right" evidence="1">
        <dbReference type="Rhea" id="RHEA:63133"/>
    </physiologicalReaction>
</comment>
<comment type="catalytic activity">
    <reaction evidence="1">
        <text>apo-[alkylcobalamin reductase] + adenosylcob(III)alamin + glutathione = S-adenosylglutathione + cob(I)alamin-[alkylcobalamin reductase] + H(+)</text>
        <dbReference type="Rhea" id="RHEA:63136"/>
        <dbReference type="Rhea" id="RHEA-COMP:14730"/>
        <dbReference type="Rhea" id="RHEA-COMP:14731"/>
        <dbReference type="ChEBI" id="CHEBI:15378"/>
        <dbReference type="ChEBI" id="CHEBI:18408"/>
        <dbReference type="ChEBI" id="CHEBI:57925"/>
        <dbReference type="ChEBI" id="CHEBI:60488"/>
        <dbReference type="ChEBI" id="CHEBI:83228"/>
        <dbReference type="ChEBI" id="CHEBI:146184"/>
        <dbReference type="EC" id="2.5.1.151"/>
    </reaction>
    <physiologicalReaction direction="left-to-right" evidence="1">
        <dbReference type="Rhea" id="RHEA:63137"/>
    </physiologicalReaction>
</comment>
<comment type="cofactor">
    <cofactor evidence="1">
        <name>FAD</name>
        <dbReference type="ChEBI" id="CHEBI:57692"/>
    </cofactor>
    <cofactor evidence="1">
        <name>FMN</name>
        <dbReference type="ChEBI" id="CHEBI:58210"/>
    </cofactor>
    <text evidence="1">Can utilize both FAD and FMN.</text>
</comment>
<comment type="subunit">
    <text evidence="1">Monomer in the absence of bound substrate. Homodimer; dimerization is triggered by binding to FMN or adenosylcobalamin. Interacts with LMBRD1 and ABCD4; the interaction ensures the transport of cobalamin from the lysosome to the cytoplasm. Forms a multiprotein complex with MMADHC, MTR and MTRR; the interaction with MTR could modulate MMACHC-dependent processing of cobalamin. Heterodimer with MMADHC; the interaction might play a role in the regulation of the balance between AdoCbl and MeCbl synthesis.</text>
</comment>
<comment type="subcellular location">
    <subcellularLocation>
        <location evidence="1">Cytoplasm</location>
        <location evidence="1">Cytosol</location>
    </subcellularLocation>
</comment>
<comment type="similarity">
    <text evidence="3">Belongs to the MMACHC family.</text>
</comment>
<organism>
    <name type="scientific">Bos taurus</name>
    <name type="common">Bovine</name>
    <dbReference type="NCBI Taxonomy" id="9913"/>
    <lineage>
        <taxon>Eukaryota</taxon>
        <taxon>Metazoa</taxon>
        <taxon>Chordata</taxon>
        <taxon>Craniata</taxon>
        <taxon>Vertebrata</taxon>
        <taxon>Euteleostomi</taxon>
        <taxon>Mammalia</taxon>
        <taxon>Eutheria</taxon>
        <taxon>Laurasiatheria</taxon>
        <taxon>Artiodactyla</taxon>
        <taxon>Ruminantia</taxon>
        <taxon>Pecora</taxon>
        <taxon>Bovidae</taxon>
        <taxon>Bovinae</taxon>
        <taxon>Bos</taxon>
    </lineage>
</organism>
<protein>
    <recommendedName>
        <fullName>Cyanocobalamin reductase / alkylcobalamin dealkylase</fullName>
    </recommendedName>
    <alternativeName>
        <fullName>Alkylcobalamin:glutathione S-alkyltransferase</fullName>
        <ecNumber evidence="1">2.5.1.151</ecNumber>
    </alternativeName>
    <alternativeName>
        <fullName>CblC</fullName>
    </alternativeName>
    <alternativeName>
        <fullName>Cyanocobalamin reductase (cyanide-eliminating)</fullName>
        <ecNumber evidence="1">1.16.1.6</ecNumber>
    </alternativeName>
    <alternativeName>
        <fullName>Methylmalonic aciduria and homocystinuria type C protein</fullName>
        <shortName>MMACHC</shortName>
    </alternativeName>
</protein>
<sequence length="280" mass="31633">MEPLVAELKQKIEDTLCPFGFEVYPFQVAWYNALLPPAFHLPLPGPTLAFLVLSTPAMFDQALKPFLQSHHLQPLTDPVDQCVAYHLGRVRESLPELQIEVIADYEVHPNRRPKILAQTAAHVAGAAYYYQRQDVESDPWGTQHIAGVCIHPRFGGWFAIRGVVLLRGTEVPNLPPTKPVDCVPTRADRISLLERFNFHWRDWTYRDAVTPQERYSEEQKAYFSTPPAQRLALLGLLQPSEEPSSPSQELHITTLLSKKPQNPRRGWLSPTVSPPISPGP</sequence>
<feature type="chain" id="PRO_0000076257" description="Cyanocobalamin reductase / alkylcobalamin dealkylase">
    <location>
        <begin position="1"/>
        <end position="280"/>
    </location>
</feature>
<feature type="region of interest" description="Disordered" evidence="2">
    <location>
        <begin position="256"/>
        <end position="280"/>
    </location>
</feature>
<feature type="binding site" evidence="1">
    <location>
        <position position="104"/>
    </location>
    <ligand>
        <name>substrate</name>
    </ligand>
</feature>
<feature type="binding site" evidence="1">
    <location>
        <begin position="115"/>
        <end position="118"/>
    </location>
    <ligand>
        <name>substrate</name>
    </ligand>
</feature>
<feature type="binding site" evidence="1">
    <location>
        <begin position="129"/>
        <end position="131"/>
    </location>
    <ligand>
        <name>substrate</name>
    </ligand>
</feature>
<feature type="binding site" evidence="1">
    <location>
        <position position="149"/>
    </location>
    <ligand>
        <name>substrate</name>
    </ligand>
</feature>
<feature type="binding site" evidence="1">
    <location>
        <position position="160"/>
    </location>
    <ligand>
        <name>substrate</name>
    </ligand>
</feature>
<feature type="modified residue" description="Phosphoserine" evidence="1">
    <location>
        <position position="245"/>
    </location>
</feature>
<feature type="modified residue" description="Phosphoserine" evidence="1">
    <location>
        <position position="247"/>
    </location>
</feature>
<feature type="modified residue" description="Phosphoserine" evidence="1">
    <location>
        <position position="273"/>
    </location>
</feature>
<feature type="modified residue" description="Phosphoserine" evidence="1">
    <location>
        <position position="277"/>
    </location>
</feature>
<dbReference type="EC" id="2.5.1.151" evidence="1"/>
<dbReference type="EC" id="1.16.1.6" evidence="1"/>
<dbReference type="EMBL" id="BT020992">
    <property type="protein sequence ID" value="AAX09009.1"/>
    <property type="molecule type" value="mRNA"/>
</dbReference>
<dbReference type="SMR" id="Q5E9C8"/>
<dbReference type="FunCoup" id="Q5E9C8">
    <property type="interactions" value="202"/>
</dbReference>
<dbReference type="STRING" id="9913.ENSBTAP00000022638"/>
<dbReference type="PaxDb" id="9913-ENSBTAP00000022638"/>
<dbReference type="VEuPathDB" id="HostDB:ENSBTAG00000017027"/>
<dbReference type="eggNOG" id="KOG4552">
    <property type="taxonomic scope" value="Eukaryota"/>
</dbReference>
<dbReference type="HOGENOM" id="CLU_095722_0_0_1"/>
<dbReference type="InParanoid" id="Q5E9C8"/>
<dbReference type="OMA" id="FQVGWYN"/>
<dbReference type="OrthoDB" id="409189at2759"/>
<dbReference type="TreeFam" id="TF332476"/>
<dbReference type="BRENDA" id="2.5.1.151">
    <property type="organism ID" value="908"/>
</dbReference>
<dbReference type="Reactome" id="R-BTA-9759218">
    <property type="pathway name" value="Cobalamin (Cbl) metabolism"/>
</dbReference>
<dbReference type="Proteomes" id="UP000009136">
    <property type="component" value="Chromosome 3"/>
</dbReference>
<dbReference type="Bgee" id="ENSBTAG00000017027">
    <property type="expression patterns" value="Expressed in liver and 106 other cell types or tissues"/>
</dbReference>
<dbReference type="GO" id="GO:0005737">
    <property type="term" value="C:cytoplasm"/>
    <property type="evidence" value="ECO:0000318"/>
    <property type="project" value="GO_Central"/>
</dbReference>
<dbReference type="GO" id="GO:0005829">
    <property type="term" value="C:cytosol"/>
    <property type="evidence" value="ECO:0007669"/>
    <property type="project" value="UniProtKB-SubCell"/>
</dbReference>
<dbReference type="GO" id="GO:0031419">
    <property type="term" value="F:cobalamin binding"/>
    <property type="evidence" value="ECO:0007669"/>
    <property type="project" value="UniProtKB-KW"/>
</dbReference>
<dbReference type="GO" id="GO:0033787">
    <property type="term" value="F:cyanocobalamin reductase (cyanide-eliminating) (NADP+) activity"/>
    <property type="evidence" value="ECO:0000250"/>
    <property type="project" value="UniProtKB"/>
</dbReference>
<dbReference type="GO" id="GO:0032451">
    <property type="term" value="F:demethylase activity"/>
    <property type="evidence" value="ECO:0000250"/>
    <property type="project" value="UniProtKB"/>
</dbReference>
<dbReference type="GO" id="GO:0071949">
    <property type="term" value="F:FAD binding"/>
    <property type="evidence" value="ECO:0000250"/>
    <property type="project" value="UniProtKB"/>
</dbReference>
<dbReference type="GO" id="GO:0043295">
    <property type="term" value="F:glutathione binding"/>
    <property type="evidence" value="ECO:0000250"/>
    <property type="project" value="UniProtKB"/>
</dbReference>
<dbReference type="GO" id="GO:0016491">
    <property type="term" value="F:oxidoreductase activity"/>
    <property type="evidence" value="ECO:0000250"/>
    <property type="project" value="UniProtKB"/>
</dbReference>
<dbReference type="GO" id="GO:0016740">
    <property type="term" value="F:transferase activity"/>
    <property type="evidence" value="ECO:0007669"/>
    <property type="project" value="UniProtKB-KW"/>
</dbReference>
<dbReference type="GO" id="GO:0009235">
    <property type="term" value="P:cobalamin metabolic process"/>
    <property type="evidence" value="ECO:0000250"/>
    <property type="project" value="UniProtKB"/>
</dbReference>
<dbReference type="GO" id="GO:0070988">
    <property type="term" value="P:demethylation"/>
    <property type="evidence" value="ECO:0000250"/>
    <property type="project" value="UniProtKB"/>
</dbReference>
<dbReference type="GO" id="GO:0006749">
    <property type="term" value="P:glutathione metabolic process"/>
    <property type="evidence" value="ECO:0000250"/>
    <property type="project" value="UniProtKB"/>
</dbReference>
<dbReference type="CDD" id="cd12959">
    <property type="entry name" value="MMACHC-like"/>
    <property type="match status" value="1"/>
</dbReference>
<dbReference type="InterPro" id="IPR032037">
    <property type="entry name" value="MMACHC"/>
</dbReference>
<dbReference type="PANTHER" id="PTHR31457:SF2">
    <property type="entry name" value="CYANOCOBALAMIN REDUCTASE _ ALKYLCOBALAMIN DEALKYLASE"/>
    <property type="match status" value="1"/>
</dbReference>
<dbReference type="PANTHER" id="PTHR31457">
    <property type="entry name" value="METHYLMALONIC ACIDURIA AND HOMOCYSTINURIA TYPE C PROTEIN"/>
    <property type="match status" value="1"/>
</dbReference>
<dbReference type="Pfam" id="PF16690">
    <property type="entry name" value="MMACHC"/>
    <property type="match status" value="1"/>
</dbReference>
<reference key="1">
    <citation type="journal article" date="2005" name="BMC Genomics">
        <title>Characterization of 954 bovine full-CDS cDNA sequences.</title>
        <authorList>
            <person name="Harhay G.P."/>
            <person name="Sonstegard T.S."/>
            <person name="Keele J.W."/>
            <person name="Heaton M.P."/>
            <person name="Clawson M.L."/>
            <person name="Snelling W.M."/>
            <person name="Wiedmann R.T."/>
            <person name="Van Tassell C.P."/>
            <person name="Smith T.P.L."/>
        </authorList>
    </citation>
    <scope>NUCLEOTIDE SEQUENCE [LARGE SCALE MRNA]</scope>
</reference>